<organism>
    <name type="scientific">Campylobacter jejuni subsp. doylei (strain ATCC BAA-1458 / RM4099 / 269.97)</name>
    <dbReference type="NCBI Taxonomy" id="360109"/>
    <lineage>
        <taxon>Bacteria</taxon>
        <taxon>Pseudomonadati</taxon>
        <taxon>Campylobacterota</taxon>
        <taxon>Epsilonproteobacteria</taxon>
        <taxon>Campylobacterales</taxon>
        <taxon>Campylobacteraceae</taxon>
        <taxon>Campylobacter</taxon>
    </lineage>
</organism>
<accession>A7H1L5</accession>
<comment type="function">
    <text evidence="2">One of the essential components for the initiation of protein synthesis. Protects formylmethionyl-tRNA from spontaneous hydrolysis and promotes its binding to the 30S ribosomal subunits. Also involved in the hydrolysis of GTP during the formation of the 70S ribosomal complex.</text>
</comment>
<comment type="subcellular location">
    <subcellularLocation>
        <location evidence="2">Cytoplasm</location>
    </subcellularLocation>
</comment>
<comment type="similarity">
    <text evidence="2">Belongs to the TRAFAC class translation factor GTPase superfamily. Classic translation factor GTPase family. IF-2 subfamily.</text>
</comment>
<proteinExistence type="inferred from homology"/>
<sequence length="854" mass="94080">MAKIRIHEIAKELGYDSKEIIEKANELGLGIKTASNAVEPDIAVAIYEYIQTREIPEAFKKNIKTPTAKKPKKENAKDQEKLNESEKKEPKKEESKEQEKQEIIDTHKPQSLASATLAKRRGLVIVKKKKDEEEIQVKKEEIKNSNDISINNEERLSLKTMFSNADESLKKKKKEKKSFVASKKESTEKMNFLDEHDFGDISLDDEDEVVLPDFSVKEQEKPQNINKKQPNFIRQAVGNSAGFGLEGGIQRRSRKKPPKKIEKKEVEEVSSVSISKEIRVYEFADKIGKSTSEVISKLFMLGMMTTKNDFLDEDAIEILAAEFGIEINIINEADEFDYVKDYEEETDEKDLVTRAPVITIMGHVDHGKTSLLDYIRKSRVASGEAGGITQHVGAYMVEKNGRKITFIDTPGHEAFTAMRARGASITDIVIIVVAADDGVKPQTKEAINHAKAAGVPIIIAINKMDKEAANPDMVKTQLAEMEIMPVEWGGSYEFVGVSAKTGMGIEDLLEIVLLQADILELKANPKSFAKASIIESSVQKGRGAVATIIVQNGTLAVGSTVVAGEAYGKVRAMSDDQGKALKEIKPGECGVIVGLSEVADAGEILIAVKTDKEAREYANKRHEYNRQKELSKSTKVSIDELGAKIKEGNLKALPVILKADVQGSLEALKASLEKLRNDEIKVNIIYSGVGGITQSDIELASASENSIVLGFNIRPTGEVKERAKDKGVEIKTYNVIYNLLDDVKALLGGMMSPIISEEQLGQAEIRQVINVPKIGQIAGCMVTEGVINRGAKIRLIRDGVVVYEGNVSSLKRFKDDAKEVAKGYECGVGIEGCDDMRVGDYIESYKEVEEQASL</sequence>
<keyword id="KW-0963">Cytoplasm</keyword>
<keyword id="KW-0342">GTP-binding</keyword>
<keyword id="KW-0396">Initiation factor</keyword>
<keyword id="KW-0547">Nucleotide-binding</keyword>
<keyword id="KW-0648">Protein biosynthesis</keyword>
<dbReference type="EMBL" id="CP000768">
    <property type="protein sequence ID" value="ABS43395.1"/>
    <property type="molecule type" value="Genomic_DNA"/>
</dbReference>
<dbReference type="SMR" id="A7H1L5"/>
<dbReference type="KEGG" id="cjd:JJD26997_0149"/>
<dbReference type="HOGENOM" id="CLU_006301_4_1_7"/>
<dbReference type="Proteomes" id="UP000002302">
    <property type="component" value="Chromosome"/>
</dbReference>
<dbReference type="GO" id="GO:0005829">
    <property type="term" value="C:cytosol"/>
    <property type="evidence" value="ECO:0007669"/>
    <property type="project" value="TreeGrafter"/>
</dbReference>
<dbReference type="GO" id="GO:0005525">
    <property type="term" value="F:GTP binding"/>
    <property type="evidence" value="ECO:0007669"/>
    <property type="project" value="UniProtKB-KW"/>
</dbReference>
<dbReference type="GO" id="GO:0003924">
    <property type="term" value="F:GTPase activity"/>
    <property type="evidence" value="ECO:0007669"/>
    <property type="project" value="UniProtKB-UniRule"/>
</dbReference>
<dbReference type="GO" id="GO:0003743">
    <property type="term" value="F:translation initiation factor activity"/>
    <property type="evidence" value="ECO:0007669"/>
    <property type="project" value="UniProtKB-UniRule"/>
</dbReference>
<dbReference type="CDD" id="cd01887">
    <property type="entry name" value="IF2_eIF5B"/>
    <property type="match status" value="1"/>
</dbReference>
<dbReference type="CDD" id="cd03702">
    <property type="entry name" value="IF2_mtIF2_II"/>
    <property type="match status" value="1"/>
</dbReference>
<dbReference type="CDD" id="cd03692">
    <property type="entry name" value="mtIF2_IVc"/>
    <property type="match status" value="1"/>
</dbReference>
<dbReference type="FunFam" id="2.40.30.10:FF:000008">
    <property type="entry name" value="Translation initiation factor IF-2"/>
    <property type="match status" value="1"/>
</dbReference>
<dbReference type="FunFam" id="2.40.30.10:FF:000054">
    <property type="entry name" value="Translation initiation factor IF-2"/>
    <property type="match status" value="1"/>
</dbReference>
<dbReference type="FunFam" id="3.40.50.10050:FF:000001">
    <property type="entry name" value="Translation initiation factor IF-2"/>
    <property type="match status" value="1"/>
</dbReference>
<dbReference type="FunFam" id="3.40.50.300:FF:000019">
    <property type="entry name" value="Translation initiation factor IF-2"/>
    <property type="match status" value="1"/>
</dbReference>
<dbReference type="Gene3D" id="1.10.10.2480">
    <property type="match status" value="1"/>
</dbReference>
<dbReference type="Gene3D" id="3.40.50.300">
    <property type="entry name" value="P-loop containing nucleotide triphosphate hydrolases"/>
    <property type="match status" value="1"/>
</dbReference>
<dbReference type="Gene3D" id="2.40.30.10">
    <property type="entry name" value="Translation factors"/>
    <property type="match status" value="2"/>
</dbReference>
<dbReference type="Gene3D" id="3.40.50.10050">
    <property type="entry name" value="Translation initiation factor IF- 2, domain 3"/>
    <property type="match status" value="1"/>
</dbReference>
<dbReference type="HAMAP" id="MF_00100_B">
    <property type="entry name" value="IF_2_B"/>
    <property type="match status" value="1"/>
</dbReference>
<dbReference type="InterPro" id="IPR053905">
    <property type="entry name" value="EF-G-like_DII"/>
</dbReference>
<dbReference type="InterPro" id="IPR004161">
    <property type="entry name" value="EFTu-like_2"/>
</dbReference>
<dbReference type="InterPro" id="IPR044145">
    <property type="entry name" value="IF2_II"/>
</dbReference>
<dbReference type="InterPro" id="IPR006847">
    <property type="entry name" value="IF2_N"/>
</dbReference>
<dbReference type="InterPro" id="IPR027417">
    <property type="entry name" value="P-loop_NTPase"/>
</dbReference>
<dbReference type="InterPro" id="IPR005225">
    <property type="entry name" value="Small_GTP-bd"/>
</dbReference>
<dbReference type="InterPro" id="IPR000795">
    <property type="entry name" value="T_Tr_GTP-bd_dom"/>
</dbReference>
<dbReference type="InterPro" id="IPR000178">
    <property type="entry name" value="TF_IF2_bacterial-like"/>
</dbReference>
<dbReference type="InterPro" id="IPR015760">
    <property type="entry name" value="TIF_IF2"/>
</dbReference>
<dbReference type="InterPro" id="IPR023115">
    <property type="entry name" value="TIF_IF2_dom3"/>
</dbReference>
<dbReference type="InterPro" id="IPR036925">
    <property type="entry name" value="TIF_IF2_dom3_sf"/>
</dbReference>
<dbReference type="InterPro" id="IPR009000">
    <property type="entry name" value="Transl_B-barrel_sf"/>
</dbReference>
<dbReference type="NCBIfam" id="TIGR00487">
    <property type="entry name" value="IF-2"/>
    <property type="match status" value="1"/>
</dbReference>
<dbReference type="NCBIfam" id="TIGR00231">
    <property type="entry name" value="small_GTP"/>
    <property type="match status" value="1"/>
</dbReference>
<dbReference type="PANTHER" id="PTHR43381:SF5">
    <property type="entry name" value="TR-TYPE G DOMAIN-CONTAINING PROTEIN"/>
    <property type="match status" value="1"/>
</dbReference>
<dbReference type="PANTHER" id="PTHR43381">
    <property type="entry name" value="TRANSLATION INITIATION FACTOR IF-2-RELATED"/>
    <property type="match status" value="1"/>
</dbReference>
<dbReference type="Pfam" id="PF22042">
    <property type="entry name" value="EF-G_D2"/>
    <property type="match status" value="1"/>
</dbReference>
<dbReference type="Pfam" id="PF00009">
    <property type="entry name" value="GTP_EFTU"/>
    <property type="match status" value="1"/>
</dbReference>
<dbReference type="Pfam" id="PF03144">
    <property type="entry name" value="GTP_EFTU_D2"/>
    <property type="match status" value="1"/>
</dbReference>
<dbReference type="Pfam" id="PF11987">
    <property type="entry name" value="IF-2"/>
    <property type="match status" value="1"/>
</dbReference>
<dbReference type="Pfam" id="PF04760">
    <property type="entry name" value="IF2_N"/>
    <property type="match status" value="2"/>
</dbReference>
<dbReference type="SUPFAM" id="SSF52156">
    <property type="entry name" value="Initiation factor IF2/eIF5b, domain 3"/>
    <property type="match status" value="1"/>
</dbReference>
<dbReference type="SUPFAM" id="SSF52540">
    <property type="entry name" value="P-loop containing nucleoside triphosphate hydrolases"/>
    <property type="match status" value="1"/>
</dbReference>
<dbReference type="SUPFAM" id="SSF50447">
    <property type="entry name" value="Translation proteins"/>
    <property type="match status" value="2"/>
</dbReference>
<dbReference type="PROSITE" id="PS51722">
    <property type="entry name" value="G_TR_2"/>
    <property type="match status" value="1"/>
</dbReference>
<dbReference type="PROSITE" id="PS01176">
    <property type="entry name" value="IF2"/>
    <property type="match status" value="1"/>
</dbReference>
<name>IF2_CAMJD</name>
<gene>
    <name evidence="2" type="primary">infB</name>
    <name type="ordered locus">JJD26997_0149</name>
</gene>
<evidence type="ECO:0000250" key="1"/>
<evidence type="ECO:0000255" key="2">
    <source>
        <dbReference type="HAMAP-Rule" id="MF_00100"/>
    </source>
</evidence>
<evidence type="ECO:0000256" key="3">
    <source>
        <dbReference type="SAM" id="MobiDB-lite"/>
    </source>
</evidence>
<protein>
    <recommendedName>
        <fullName evidence="2">Translation initiation factor IF-2</fullName>
    </recommendedName>
</protein>
<reference key="1">
    <citation type="submission" date="2007-07" db="EMBL/GenBank/DDBJ databases">
        <title>Complete genome sequence of Campylobacter jejuni subsp doylei 269.97 isolated from human blood.</title>
        <authorList>
            <person name="Fouts D.E."/>
            <person name="Mongodin E.F."/>
            <person name="Puiu D."/>
            <person name="Sebastian Y."/>
            <person name="Miller W.G."/>
            <person name="Mandrell R.E."/>
            <person name="Lastovica A.J."/>
            <person name="Nelson K.E."/>
        </authorList>
    </citation>
    <scope>NUCLEOTIDE SEQUENCE [LARGE SCALE GENOMIC DNA]</scope>
    <source>
        <strain>ATCC BAA-1458 / RM4099 / 269.97</strain>
    </source>
</reference>
<feature type="chain" id="PRO_1000008222" description="Translation initiation factor IF-2">
    <location>
        <begin position="1"/>
        <end position="854"/>
    </location>
</feature>
<feature type="domain" description="tr-type G">
    <location>
        <begin position="353"/>
        <end position="520"/>
    </location>
</feature>
<feature type="region of interest" description="Disordered" evidence="3">
    <location>
        <begin position="61"/>
        <end position="115"/>
    </location>
</feature>
<feature type="region of interest" description="Disordered" evidence="3">
    <location>
        <begin position="167"/>
        <end position="186"/>
    </location>
</feature>
<feature type="region of interest" description="G1" evidence="1">
    <location>
        <begin position="362"/>
        <end position="369"/>
    </location>
</feature>
<feature type="region of interest" description="G2" evidence="1">
    <location>
        <begin position="387"/>
        <end position="391"/>
    </location>
</feature>
<feature type="region of interest" description="G3" evidence="1">
    <location>
        <begin position="408"/>
        <end position="411"/>
    </location>
</feature>
<feature type="region of interest" description="G4" evidence="1">
    <location>
        <begin position="462"/>
        <end position="465"/>
    </location>
</feature>
<feature type="region of interest" description="G5" evidence="1">
    <location>
        <begin position="498"/>
        <end position="500"/>
    </location>
</feature>
<feature type="compositionally biased region" description="Basic residues" evidence="3">
    <location>
        <begin position="61"/>
        <end position="72"/>
    </location>
</feature>
<feature type="compositionally biased region" description="Basic and acidic residues" evidence="3">
    <location>
        <begin position="73"/>
        <end position="108"/>
    </location>
</feature>
<feature type="binding site" evidence="2">
    <location>
        <begin position="362"/>
        <end position="369"/>
    </location>
    <ligand>
        <name>GTP</name>
        <dbReference type="ChEBI" id="CHEBI:37565"/>
    </ligand>
</feature>
<feature type="binding site" evidence="2">
    <location>
        <begin position="408"/>
        <end position="412"/>
    </location>
    <ligand>
        <name>GTP</name>
        <dbReference type="ChEBI" id="CHEBI:37565"/>
    </ligand>
</feature>
<feature type="binding site" evidence="2">
    <location>
        <begin position="462"/>
        <end position="465"/>
    </location>
    <ligand>
        <name>GTP</name>
        <dbReference type="ChEBI" id="CHEBI:37565"/>
    </ligand>
</feature>